<accession>Q601E5</accession>
<sequence>MSKIKFKTKSALKKRIKVTGTGKVKHGHAYRSHLAQSKTTKQKRQSRKSTLMNNSDFKRLKKLI</sequence>
<feature type="chain" id="PRO_0000258705" description="Large ribosomal subunit protein bL35">
    <location>
        <begin position="1"/>
        <end position="64"/>
    </location>
</feature>
<feature type="region of interest" description="Disordered" evidence="2">
    <location>
        <begin position="22"/>
        <end position="64"/>
    </location>
</feature>
<feature type="compositionally biased region" description="Basic residues" evidence="2">
    <location>
        <begin position="22"/>
        <end position="31"/>
    </location>
</feature>
<protein>
    <recommendedName>
        <fullName evidence="1">Large ribosomal subunit protein bL35</fullName>
    </recommendedName>
    <alternativeName>
        <fullName evidence="3">50S ribosomal protein L35</fullName>
    </alternativeName>
</protein>
<comment type="similarity">
    <text evidence="1">Belongs to the bacterial ribosomal protein bL35 family.</text>
</comment>
<keyword id="KW-0687">Ribonucleoprotein</keyword>
<keyword id="KW-0689">Ribosomal protein</keyword>
<reference key="1">
    <citation type="journal article" date="2004" name="J. Bacteriol.">
        <title>The genome sequence of Mycoplasma hyopneumoniae strain 232, the agent of swine mycoplasmosis.</title>
        <authorList>
            <person name="Minion F.C."/>
            <person name="Lefkowitz E.J."/>
            <person name="Madsen M.L."/>
            <person name="Cleary B.J."/>
            <person name="Swartzell S.M."/>
            <person name="Mahairas G.G."/>
        </authorList>
    </citation>
    <scope>NUCLEOTIDE SEQUENCE [LARGE SCALE GENOMIC DNA]</scope>
    <source>
        <strain>232</strain>
    </source>
</reference>
<dbReference type="EMBL" id="AE017332">
    <property type="protein sequence ID" value="AAV27487.1"/>
    <property type="molecule type" value="Genomic_DNA"/>
</dbReference>
<dbReference type="RefSeq" id="WP_011206094.1">
    <property type="nucleotide sequence ID" value="NC_006360.1"/>
</dbReference>
<dbReference type="SMR" id="Q601E5"/>
<dbReference type="GeneID" id="41334422"/>
<dbReference type="KEGG" id="mhy:mhp257"/>
<dbReference type="eggNOG" id="COG0291">
    <property type="taxonomic scope" value="Bacteria"/>
</dbReference>
<dbReference type="HOGENOM" id="CLU_169643_3_1_14"/>
<dbReference type="PhylomeDB" id="Q601E5"/>
<dbReference type="Proteomes" id="UP000006822">
    <property type="component" value="Chromosome"/>
</dbReference>
<dbReference type="GO" id="GO:0022625">
    <property type="term" value="C:cytosolic large ribosomal subunit"/>
    <property type="evidence" value="ECO:0007669"/>
    <property type="project" value="TreeGrafter"/>
</dbReference>
<dbReference type="GO" id="GO:0003735">
    <property type="term" value="F:structural constituent of ribosome"/>
    <property type="evidence" value="ECO:0007669"/>
    <property type="project" value="InterPro"/>
</dbReference>
<dbReference type="GO" id="GO:0006412">
    <property type="term" value="P:translation"/>
    <property type="evidence" value="ECO:0007669"/>
    <property type="project" value="UniProtKB-UniRule"/>
</dbReference>
<dbReference type="FunFam" id="4.10.410.60:FF:000001">
    <property type="entry name" value="50S ribosomal protein L35"/>
    <property type="match status" value="1"/>
</dbReference>
<dbReference type="Gene3D" id="4.10.410.60">
    <property type="match status" value="1"/>
</dbReference>
<dbReference type="HAMAP" id="MF_00514">
    <property type="entry name" value="Ribosomal_bL35"/>
    <property type="match status" value="1"/>
</dbReference>
<dbReference type="InterPro" id="IPR001706">
    <property type="entry name" value="Ribosomal_bL35"/>
</dbReference>
<dbReference type="InterPro" id="IPR021137">
    <property type="entry name" value="Ribosomal_bL35-like"/>
</dbReference>
<dbReference type="InterPro" id="IPR018265">
    <property type="entry name" value="Ribosomal_bL35_CS"/>
</dbReference>
<dbReference type="InterPro" id="IPR037229">
    <property type="entry name" value="Ribosomal_bL35_sf"/>
</dbReference>
<dbReference type="NCBIfam" id="TIGR00001">
    <property type="entry name" value="rpmI_bact"/>
    <property type="match status" value="1"/>
</dbReference>
<dbReference type="PANTHER" id="PTHR33343">
    <property type="entry name" value="54S RIBOSOMAL PROTEIN BL35M"/>
    <property type="match status" value="1"/>
</dbReference>
<dbReference type="PANTHER" id="PTHR33343:SF1">
    <property type="entry name" value="LARGE RIBOSOMAL SUBUNIT PROTEIN BL35M"/>
    <property type="match status" value="1"/>
</dbReference>
<dbReference type="Pfam" id="PF01632">
    <property type="entry name" value="Ribosomal_L35p"/>
    <property type="match status" value="1"/>
</dbReference>
<dbReference type="PRINTS" id="PR00064">
    <property type="entry name" value="RIBOSOMALL35"/>
</dbReference>
<dbReference type="SUPFAM" id="SSF143034">
    <property type="entry name" value="L35p-like"/>
    <property type="match status" value="1"/>
</dbReference>
<dbReference type="PROSITE" id="PS00936">
    <property type="entry name" value="RIBOSOMAL_L35"/>
    <property type="match status" value="1"/>
</dbReference>
<organism>
    <name type="scientific">Mesomycoplasma hyopneumoniae (strain 232)</name>
    <name type="common">Mycoplasma hyopneumoniae</name>
    <dbReference type="NCBI Taxonomy" id="295358"/>
    <lineage>
        <taxon>Bacteria</taxon>
        <taxon>Bacillati</taxon>
        <taxon>Mycoplasmatota</taxon>
        <taxon>Mycoplasmoidales</taxon>
        <taxon>Metamycoplasmataceae</taxon>
        <taxon>Mesomycoplasma</taxon>
    </lineage>
</organism>
<proteinExistence type="inferred from homology"/>
<evidence type="ECO:0000255" key="1">
    <source>
        <dbReference type="HAMAP-Rule" id="MF_00514"/>
    </source>
</evidence>
<evidence type="ECO:0000256" key="2">
    <source>
        <dbReference type="SAM" id="MobiDB-lite"/>
    </source>
</evidence>
<evidence type="ECO:0000305" key="3"/>
<name>RL35_MESH2</name>
<gene>
    <name evidence="1" type="primary">rpmI</name>
    <name type="ordered locus">mhp257</name>
</gene>